<proteinExistence type="inferred from homology"/>
<sequence>MARIGDGGDLLKCSFCGKSQKQVKKLIAGPGVYICDECIDLCNEIIEEELADADDVKLDELPKPAEIREFLEGYVIGQDTAKRTLAVAVYNHYKRIQAGEKARDSRSEPVELAKSNILMLGPTGCGKTYLAQTLAKMLNVPFAIADATALTEAGYVGEDVENILLKLIQAADYDVKRAETGIIYIDEVDKIARKSENPSITRDVSGEGVQQALLKILEGTQASVPPQGGRKHPHQEFIQIDTTNVLFIVAGAFAGLERIVSDRVGKRGLGFGAEVKSKAEIDTQDHFAEVMPEDLIKFGLIPEFIGRLPVVASVTNLDKESLVQILSQPKNALVKQYTRLFEMDGVELEFAEDALEAIADQAIHRGTGARGLRAIMEEVLLPVMYDIPSRDDVAKVVVTKETVLDNVLPTIVPRKPSRTERRDKSA</sequence>
<reference key="1">
    <citation type="submission" date="2006-12" db="EMBL/GenBank/DDBJ databases">
        <title>Complete sequence of Mycobacterium vanbaalenii PYR-1.</title>
        <authorList>
            <consortium name="US DOE Joint Genome Institute"/>
            <person name="Copeland A."/>
            <person name="Lucas S."/>
            <person name="Lapidus A."/>
            <person name="Barry K."/>
            <person name="Detter J.C."/>
            <person name="Glavina del Rio T."/>
            <person name="Hammon N."/>
            <person name="Israni S."/>
            <person name="Dalin E."/>
            <person name="Tice H."/>
            <person name="Pitluck S."/>
            <person name="Singan V."/>
            <person name="Schmutz J."/>
            <person name="Larimer F."/>
            <person name="Land M."/>
            <person name="Hauser L."/>
            <person name="Kyrpides N."/>
            <person name="Anderson I.J."/>
            <person name="Miller C."/>
            <person name="Richardson P."/>
        </authorList>
    </citation>
    <scope>NUCLEOTIDE SEQUENCE [LARGE SCALE GENOMIC DNA]</scope>
    <source>
        <strain>DSM 7251 / JCM 13017 / BCRC 16820 / KCTC 9966 / NRRL B-24157 / PYR-1</strain>
    </source>
</reference>
<dbReference type="EMBL" id="CP000511">
    <property type="protein sequence ID" value="ABM14813.1"/>
    <property type="molecule type" value="Genomic_DNA"/>
</dbReference>
<dbReference type="RefSeq" id="WP_011781192.1">
    <property type="nucleotide sequence ID" value="NZ_JACKSD010000156.1"/>
</dbReference>
<dbReference type="SMR" id="A1TCB3"/>
<dbReference type="STRING" id="350058.Mvan_4036"/>
<dbReference type="KEGG" id="mva:Mvan_4036"/>
<dbReference type="eggNOG" id="COG1219">
    <property type="taxonomic scope" value="Bacteria"/>
</dbReference>
<dbReference type="HOGENOM" id="CLU_014218_8_2_11"/>
<dbReference type="Proteomes" id="UP000009159">
    <property type="component" value="Chromosome"/>
</dbReference>
<dbReference type="GO" id="GO:0009376">
    <property type="term" value="C:HslUV protease complex"/>
    <property type="evidence" value="ECO:0007669"/>
    <property type="project" value="TreeGrafter"/>
</dbReference>
<dbReference type="GO" id="GO:0005524">
    <property type="term" value="F:ATP binding"/>
    <property type="evidence" value="ECO:0007669"/>
    <property type="project" value="UniProtKB-UniRule"/>
</dbReference>
<dbReference type="GO" id="GO:0016887">
    <property type="term" value="F:ATP hydrolysis activity"/>
    <property type="evidence" value="ECO:0007669"/>
    <property type="project" value="InterPro"/>
</dbReference>
<dbReference type="GO" id="GO:0140662">
    <property type="term" value="F:ATP-dependent protein folding chaperone"/>
    <property type="evidence" value="ECO:0007669"/>
    <property type="project" value="InterPro"/>
</dbReference>
<dbReference type="GO" id="GO:0046983">
    <property type="term" value="F:protein dimerization activity"/>
    <property type="evidence" value="ECO:0007669"/>
    <property type="project" value="InterPro"/>
</dbReference>
<dbReference type="GO" id="GO:0051082">
    <property type="term" value="F:unfolded protein binding"/>
    <property type="evidence" value="ECO:0007669"/>
    <property type="project" value="UniProtKB-UniRule"/>
</dbReference>
<dbReference type="GO" id="GO:0008270">
    <property type="term" value="F:zinc ion binding"/>
    <property type="evidence" value="ECO:0007669"/>
    <property type="project" value="InterPro"/>
</dbReference>
<dbReference type="GO" id="GO:0051301">
    <property type="term" value="P:cell division"/>
    <property type="evidence" value="ECO:0007669"/>
    <property type="project" value="TreeGrafter"/>
</dbReference>
<dbReference type="GO" id="GO:0051603">
    <property type="term" value="P:proteolysis involved in protein catabolic process"/>
    <property type="evidence" value="ECO:0007669"/>
    <property type="project" value="TreeGrafter"/>
</dbReference>
<dbReference type="CDD" id="cd19497">
    <property type="entry name" value="RecA-like_ClpX"/>
    <property type="match status" value="1"/>
</dbReference>
<dbReference type="FunFam" id="1.10.8.60:FF:000002">
    <property type="entry name" value="ATP-dependent Clp protease ATP-binding subunit ClpX"/>
    <property type="match status" value="1"/>
</dbReference>
<dbReference type="FunFam" id="3.40.50.300:FF:000005">
    <property type="entry name" value="ATP-dependent Clp protease ATP-binding subunit ClpX"/>
    <property type="match status" value="1"/>
</dbReference>
<dbReference type="Gene3D" id="1.10.8.60">
    <property type="match status" value="1"/>
</dbReference>
<dbReference type="Gene3D" id="6.20.220.10">
    <property type="entry name" value="ClpX chaperone, C4-type zinc finger domain"/>
    <property type="match status" value="1"/>
</dbReference>
<dbReference type="Gene3D" id="3.40.50.300">
    <property type="entry name" value="P-loop containing nucleotide triphosphate hydrolases"/>
    <property type="match status" value="1"/>
</dbReference>
<dbReference type="HAMAP" id="MF_00175">
    <property type="entry name" value="ClpX"/>
    <property type="match status" value="1"/>
</dbReference>
<dbReference type="InterPro" id="IPR003593">
    <property type="entry name" value="AAA+_ATPase"/>
</dbReference>
<dbReference type="InterPro" id="IPR050052">
    <property type="entry name" value="ATP-dep_Clp_protease_ClpX"/>
</dbReference>
<dbReference type="InterPro" id="IPR003959">
    <property type="entry name" value="ATPase_AAA_core"/>
</dbReference>
<dbReference type="InterPro" id="IPR019489">
    <property type="entry name" value="Clp_ATPase_C"/>
</dbReference>
<dbReference type="InterPro" id="IPR004487">
    <property type="entry name" value="Clp_protease_ATP-bd_su_ClpX"/>
</dbReference>
<dbReference type="InterPro" id="IPR046425">
    <property type="entry name" value="ClpX_bact"/>
</dbReference>
<dbReference type="InterPro" id="IPR027417">
    <property type="entry name" value="P-loop_NTPase"/>
</dbReference>
<dbReference type="InterPro" id="IPR010603">
    <property type="entry name" value="Znf_CppX_C4"/>
</dbReference>
<dbReference type="InterPro" id="IPR038366">
    <property type="entry name" value="Znf_CppX_C4_sf"/>
</dbReference>
<dbReference type="NCBIfam" id="TIGR00382">
    <property type="entry name" value="clpX"/>
    <property type="match status" value="1"/>
</dbReference>
<dbReference type="NCBIfam" id="NF003745">
    <property type="entry name" value="PRK05342.1"/>
    <property type="match status" value="1"/>
</dbReference>
<dbReference type="PANTHER" id="PTHR48102:SF7">
    <property type="entry name" value="ATP-DEPENDENT CLP PROTEASE ATP-BINDING SUBUNIT CLPX-LIKE, MITOCHONDRIAL"/>
    <property type="match status" value="1"/>
</dbReference>
<dbReference type="PANTHER" id="PTHR48102">
    <property type="entry name" value="ATP-DEPENDENT CLP PROTEASE ATP-BINDING SUBUNIT CLPX-LIKE, MITOCHONDRIAL-RELATED"/>
    <property type="match status" value="1"/>
</dbReference>
<dbReference type="Pfam" id="PF07724">
    <property type="entry name" value="AAA_2"/>
    <property type="match status" value="1"/>
</dbReference>
<dbReference type="Pfam" id="PF10431">
    <property type="entry name" value="ClpB_D2-small"/>
    <property type="match status" value="1"/>
</dbReference>
<dbReference type="Pfam" id="PF06689">
    <property type="entry name" value="zf-C4_ClpX"/>
    <property type="match status" value="1"/>
</dbReference>
<dbReference type="SMART" id="SM00382">
    <property type="entry name" value="AAA"/>
    <property type="match status" value="1"/>
</dbReference>
<dbReference type="SMART" id="SM01086">
    <property type="entry name" value="ClpB_D2-small"/>
    <property type="match status" value="1"/>
</dbReference>
<dbReference type="SMART" id="SM00994">
    <property type="entry name" value="zf-C4_ClpX"/>
    <property type="match status" value="1"/>
</dbReference>
<dbReference type="SUPFAM" id="SSF57716">
    <property type="entry name" value="Glucocorticoid receptor-like (DNA-binding domain)"/>
    <property type="match status" value="1"/>
</dbReference>
<dbReference type="SUPFAM" id="SSF52540">
    <property type="entry name" value="P-loop containing nucleoside triphosphate hydrolases"/>
    <property type="match status" value="1"/>
</dbReference>
<dbReference type="PROSITE" id="PS51902">
    <property type="entry name" value="CLPX_ZB"/>
    <property type="match status" value="1"/>
</dbReference>
<name>CLPX_MYCVP</name>
<accession>A1TCB3</accession>
<keyword id="KW-0067">ATP-binding</keyword>
<keyword id="KW-0143">Chaperone</keyword>
<keyword id="KW-0479">Metal-binding</keyword>
<keyword id="KW-0547">Nucleotide-binding</keyword>
<keyword id="KW-0862">Zinc</keyword>
<comment type="function">
    <text evidence="1">ATP-dependent specificity component of the Clp protease. It directs the protease to specific substrates. Can perform chaperone functions in the absence of ClpP.</text>
</comment>
<comment type="subunit">
    <text evidence="1">Component of the ClpX-ClpP complex. Forms a hexameric ring that, in the presence of ATP, binds to fourteen ClpP subunits assembled into a disk-like structure with a central cavity, resembling the structure of eukaryotic proteasomes.</text>
</comment>
<comment type="similarity">
    <text evidence="1">Belongs to the ClpX chaperone family.</text>
</comment>
<feature type="chain" id="PRO_1000024594" description="ATP-dependent Clp protease ATP-binding subunit ClpX">
    <location>
        <begin position="1"/>
        <end position="426"/>
    </location>
</feature>
<feature type="domain" description="ClpX-type ZB" evidence="2">
    <location>
        <begin position="1"/>
        <end position="54"/>
    </location>
</feature>
<feature type="binding site" evidence="2">
    <location>
        <position position="13"/>
    </location>
    <ligand>
        <name>Zn(2+)</name>
        <dbReference type="ChEBI" id="CHEBI:29105"/>
    </ligand>
</feature>
<feature type="binding site" evidence="2">
    <location>
        <position position="16"/>
    </location>
    <ligand>
        <name>Zn(2+)</name>
        <dbReference type="ChEBI" id="CHEBI:29105"/>
    </ligand>
</feature>
<feature type="binding site" evidence="2">
    <location>
        <position position="35"/>
    </location>
    <ligand>
        <name>Zn(2+)</name>
        <dbReference type="ChEBI" id="CHEBI:29105"/>
    </ligand>
</feature>
<feature type="binding site" evidence="2">
    <location>
        <position position="38"/>
    </location>
    <ligand>
        <name>Zn(2+)</name>
        <dbReference type="ChEBI" id="CHEBI:29105"/>
    </ligand>
</feature>
<feature type="binding site" evidence="1">
    <location>
        <begin position="122"/>
        <end position="129"/>
    </location>
    <ligand>
        <name>ATP</name>
        <dbReference type="ChEBI" id="CHEBI:30616"/>
    </ligand>
</feature>
<organism>
    <name type="scientific">Mycolicibacterium vanbaalenii (strain DSM 7251 / JCM 13017 / BCRC 16820 / KCTC 9966 / NRRL B-24157 / PYR-1)</name>
    <name type="common">Mycobacterium vanbaalenii</name>
    <dbReference type="NCBI Taxonomy" id="350058"/>
    <lineage>
        <taxon>Bacteria</taxon>
        <taxon>Bacillati</taxon>
        <taxon>Actinomycetota</taxon>
        <taxon>Actinomycetes</taxon>
        <taxon>Mycobacteriales</taxon>
        <taxon>Mycobacteriaceae</taxon>
        <taxon>Mycolicibacterium</taxon>
    </lineage>
</organism>
<evidence type="ECO:0000255" key="1">
    <source>
        <dbReference type="HAMAP-Rule" id="MF_00175"/>
    </source>
</evidence>
<evidence type="ECO:0000255" key="2">
    <source>
        <dbReference type="PROSITE-ProRule" id="PRU01250"/>
    </source>
</evidence>
<protein>
    <recommendedName>
        <fullName evidence="1">ATP-dependent Clp protease ATP-binding subunit ClpX</fullName>
    </recommendedName>
</protein>
<gene>
    <name evidence="1" type="primary">clpX</name>
    <name type="ordered locus">Mvan_4036</name>
</gene>